<feature type="chain" id="PRO_0000449396" description="Xylose/arabinose-binding protein XylF">
    <location>
        <begin position="1"/>
        <end position="402"/>
    </location>
</feature>
<feature type="transmembrane region" description="Helical" evidence="1">
    <location>
        <begin position="38"/>
        <end position="58"/>
    </location>
</feature>
<gene>
    <name evidence="3" type="primary">xylF</name>
    <name evidence="6" type="ordered locus">Saci_2122</name>
</gene>
<protein>
    <recommendedName>
        <fullName evidence="4">Xylose/arabinose-binding protein XylF</fullName>
    </recommendedName>
    <alternativeName>
        <fullName evidence="3">D-xylose/L-arabinose substrate binding protein</fullName>
        <shortName evidence="3">SBP</shortName>
    </alternativeName>
</protein>
<evidence type="ECO:0000255" key="1"/>
<evidence type="ECO:0000269" key="2">
    <source>
    </source>
</evidence>
<evidence type="ECO:0000303" key="3">
    <source>
    </source>
</evidence>
<evidence type="ECO:0000305" key="4"/>
<evidence type="ECO:0000305" key="5">
    <source>
    </source>
</evidence>
<evidence type="ECO:0000312" key="6">
    <source>
        <dbReference type="EMBL" id="AAY81415.1"/>
    </source>
</evidence>
<comment type="function">
    <text evidence="2">Part of the ABC transporter complex XylFGH involved in the uptake of xylose and arabinose.</text>
</comment>
<comment type="subunit">
    <text evidence="5">The complex is composed of two ATP-binding proteins (XylG), two transmembrane proteins (XylH) and a solute-binding protein (XylF).</text>
</comment>
<comment type="subcellular location">
    <subcellularLocation>
        <location evidence="4">Cell membrane</location>
        <topology evidence="1">Single-pass membrane protein</topology>
    </subcellularLocation>
</comment>
<comment type="induction">
    <text evidence="2">Up-regulated in the presence of D-xylose, L-arabinose and D-arabinose.</text>
</comment>
<comment type="disruption phenotype">
    <text evidence="2">Deletion of the gene results in a growth defect on D-xylose and L-arabinose.</text>
</comment>
<comment type="similarity">
    <text evidence="4">Belongs to the bacterial solute-binding protein 2 family.</text>
</comment>
<dbReference type="EMBL" id="CP000077">
    <property type="protein sequence ID" value="AAY81415.1"/>
    <property type="molecule type" value="Genomic_DNA"/>
</dbReference>
<dbReference type="RefSeq" id="WP_011278917.1">
    <property type="nucleotide sequence ID" value="NC_007181.1"/>
</dbReference>
<dbReference type="SMR" id="Q4J710"/>
<dbReference type="STRING" id="330779.Saci_2122"/>
<dbReference type="GeneID" id="14552639"/>
<dbReference type="GeneID" id="78442483"/>
<dbReference type="KEGG" id="sai:Saci_2122"/>
<dbReference type="PATRIC" id="fig|330779.12.peg.2127"/>
<dbReference type="eggNOG" id="arCOG07728">
    <property type="taxonomic scope" value="Archaea"/>
</dbReference>
<dbReference type="HOGENOM" id="CLU_037628_3_5_2"/>
<dbReference type="BRENDA" id="7.5.2.13">
    <property type="organism ID" value="6160"/>
</dbReference>
<dbReference type="Proteomes" id="UP000001018">
    <property type="component" value="Chromosome"/>
</dbReference>
<dbReference type="GO" id="GO:0005886">
    <property type="term" value="C:plasma membrane"/>
    <property type="evidence" value="ECO:0007669"/>
    <property type="project" value="UniProtKB-SubCell"/>
</dbReference>
<dbReference type="GO" id="GO:0030246">
    <property type="term" value="F:carbohydrate binding"/>
    <property type="evidence" value="ECO:0007669"/>
    <property type="project" value="TreeGrafter"/>
</dbReference>
<dbReference type="CDD" id="cd19965">
    <property type="entry name" value="PBP1_ABC_sugar_binding-like"/>
    <property type="match status" value="1"/>
</dbReference>
<dbReference type="Gene3D" id="3.40.50.2300">
    <property type="match status" value="2"/>
</dbReference>
<dbReference type="InterPro" id="IPR050555">
    <property type="entry name" value="Bact_Solute-Bind_Prot2"/>
</dbReference>
<dbReference type="InterPro" id="IPR028082">
    <property type="entry name" value="Peripla_BP_I"/>
</dbReference>
<dbReference type="InterPro" id="IPR025997">
    <property type="entry name" value="SBP_2_dom"/>
</dbReference>
<dbReference type="PANTHER" id="PTHR30036:SF7">
    <property type="entry name" value="ABC TRANSPORTER PERIPLASMIC-BINDING PROTEIN YPHF"/>
    <property type="match status" value="1"/>
</dbReference>
<dbReference type="PANTHER" id="PTHR30036">
    <property type="entry name" value="D-XYLOSE-BINDING PERIPLASMIC PROTEIN"/>
    <property type="match status" value="1"/>
</dbReference>
<dbReference type="Pfam" id="PF13407">
    <property type="entry name" value="Peripla_BP_4"/>
    <property type="match status" value="1"/>
</dbReference>
<dbReference type="SUPFAM" id="SSF53822">
    <property type="entry name" value="Periplasmic binding protein-like I"/>
    <property type="match status" value="1"/>
</dbReference>
<reference key="1">
    <citation type="journal article" date="2005" name="J. Bacteriol.">
        <title>The genome of Sulfolobus acidocaldarius, a model organism of the Crenarchaeota.</title>
        <authorList>
            <person name="Chen L."/>
            <person name="Bruegger K."/>
            <person name="Skovgaard M."/>
            <person name="Redder P."/>
            <person name="She Q."/>
            <person name="Torarinsson E."/>
            <person name="Greve B."/>
            <person name="Awayez M."/>
            <person name="Zibat A."/>
            <person name="Klenk H.-P."/>
            <person name="Garrett R.A."/>
        </authorList>
    </citation>
    <scope>NUCLEOTIDE SEQUENCE [LARGE SCALE GENOMIC DNA]</scope>
    <source>
        <strain>ATCC 33909 / DSM 639 / JCM 8929 / NBRC 15157 / NCIMB 11770</strain>
    </source>
</reference>
<reference key="2">
    <citation type="journal article" date="2018" name="Appl. Environ. Microbiol.">
        <title>Sulfolobus acidocaldarius transports pentoses via a carbohydrate uptake transporter 2 (CUT2)-type ABC transporter and metabolizes them through the aldolase-independent Weimberg pathway.</title>
        <authorList>
            <person name="Wagner M."/>
            <person name="Shen L."/>
            <person name="Albersmeier A."/>
            <person name="van der Kolk N."/>
            <person name="Kim S."/>
            <person name="Cha J."/>
            <person name="Braesen C."/>
            <person name="Kalinowski J."/>
            <person name="Siebers B."/>
            <person name="Albers S.V."/>
        </authorList>
    </citation>
    <scope>IDENTIFICATION BY MASS SPECTROMETRY</scope>
    <scope>FUNCTION</scope>
    <scope>SUBUNIT</scope>
    <scope>INDUCTION</scope>
    <scope>DISRUPTION PHENOTYPE</scope>
    <source>
        <strain>MW001</strain>
    </source>
</reference>
<accession>Q4J710</accession>
<proteinExistence type="evidence at protein level"/>
<keyword id="KW-1003">Cell membrane</keyword>
<keyword id="KW-0472">Membrane</keyword>
<keyword id="KW-1185">Reference proteome</keyword>
<keyword id="KW-0762">Sugar transport</keyword>
<keyword id="KW-0812">Transmembrane</keyword>
<keyword id="KW-1133">Transmembrane helix</keyword>
<keyword id="KW-0813">Transport</keyword>
<sequence>MAKSKDEIKEEIAKAIINQVSKTDLSRRRALSTLAKGGIIAGVLAAFGAGFGSGYVTAPKGSSSSGVAPPQPGFMYGQVPEHPTWKIVFINHVTTNPFFVPTQYGIQDACLLLDCNYQWTGSETSDTTTMVNDMEAAISQGANGIAVSVISPNAFDKPTQDALNAGIPVFAYNAYIPTDDPSYSQYHNPPYLGYIGQSLYASGQLFGQRILNLVPSGSRVALFIATPGTANIQPRIDGIQSVIEGHYTIDVVATGALVSDEQSAIESYFNSHPDVKGMFAVDAGSTQGVGNVLREHGIKTVSNGGTIAAGGYDLLPATIQNIVDGYLDFTIDQQPYLQGFLPTLAIYLYLISDTLVYPLNIDTGSKFITNSNIQPYLLASRYEGSSTAYKPTSTTSSSSSSG</sequence>
<name>XYLF_SULAC</name>
<organism>
    <name type="scientific">Sulfolobus acidocaldarius (strain ATCC 33909 / DSM 639 / JCM 8929 / NBRC 15157 / NCIMB 11770)</name>
    <dbReference type="NCBI Taxonomy" id="330779"/>
    <lineage>
        <taxon>Archaea</taxon>
        <taxon>Thermoproteota</taxon>
        <taxon>Thermoprotei</taxon>
        <taxon>Sulfolobales</taxon>
        <taxon>Sulfolobaceae</taxon>
        <taxon>Sulfolobus</taxon>
    </lineage>
</organism>